<dbReference type="EMBL" id="AP000386">
    <property type="protein sequence ID" value="BAB02133.1"/>
    <property type="molecule type" value="Genomic_DNA"/>
</dbReference>
<dbReference type="EMBL" id="CP002686">
    <property type="protein sequence ID" value="AEE77504.1"/>
    <property type="molecule type" value="Genomic_DNA"/>
</dbReference>
<dbReference type="EMBL" id="AY045818">
    <property type="protein sequence ID" value="AAK76492.1"/>
    <property type="molecule type" value="mRNA"/>
</dbReference>
<dbReference type="EMBL" id="AY091359">
    <property type="protein sequence ID" value="AAM14298.1"/>
    <property type="molecule type" value="mRNA"/>
</dbReference>
<dbReference type="RefSeq" id="NP_189532.1">
    <property type="nucleotide sequence ID" value="NM_113811.5"/>
</dbReference>
<dbReference type="SMR" id="Q9LJW6"/>
<dbReference type="BioGRID" id="7853">
    <property type="interactions" value="71"/>
</dbReference>
<dbReference type="FunCoup" id="Q9LJW6">
    <property type="interactions" value="3454"/>
</dbReference>
<dbReference type="IntAct" id="Q9LJW6">
    <property type="interactions" value="1"/>
</dbReference>
<dbReference type="STRING" id="3702.Q9LJW6"/>
<dbReference type="PaxDb" id="3702-AT3G28900.1"/>
<dbReference type="ProteomicsDB" id="226886"/>
<dbReference type="EnsemblPlants" id="AT3G28900.1">
    <property type="protein sequence ID" value="AT3G28900.1"/>
    <property type="gene ID" value="AT3G28900"/>
</dbReference>
<dbReference type="GeneID" id="822524"/>
<dbReference type="Gramene" id="AT3G28900.1">
    <property type="protein sequence ID" value="AT3G28900.1"/>
    <property type="gene ID" value="AT3G28900"/>
</dbReference>
<dbReference type="KEGG" id="ath:AT3G28900"/>
<dbReference type="Araport" id="AT3G28900"/>
<dbReference type="TAIR" id="AT3G28900"/>
<dbReference type="eggNOG" id="KOG1790">
    <property type="taxonomic scope" value="Eukaryota"/>
</dbReference>
<dbReference type="HOGENOM" id="CLU_118652_1_1_1"/>
<dbReference type="InParanoid" id="Q9LJW6"/>
<dbReference type="OMA" id="NKRANGP"/>
<dbReference type="PhylomeDB" id="Q9LJW6"/>
<dbReference type="PRO" id="PR:Q9LJW6"/>
<dbReference type="Proteomes" id="UP000006548">
    <property type="component" value="Chromosome 3"/>
</dbReference>
<dbReference type="ExpressionAtlas" id="Q9LJW6">
    <property type="expression patterns" value="baseline and differential"/>
</dbReference>
<dbReference type="GO" id="GO:0005829">
    <property type="term" value="C:cytosol"/>
    <property type="evidence" value="ECO:0007005"/>
    <property type="project" value="TAIR"/>
</dbReference>
<dbReference type="GO" id="GO:0022625">
    <property type="term" value="C:cytosolic large ribosomal subunit"/>
    <property type="evidence" value="ECO:0007005"/>
    <property type="project" value="TAIR"/>
</dbReference>
<dbReference type="GO" id="GO:0022626">
    <property type="term" value="C:cytosolic ribosome"/>
    <property type="evidence" value="ECO:0007005"/>
    <property type="project" value="TAIR"/>
</dbReference>
<dbReference type="GO" id="GO:0003729">
    <property type="term" value="F:mRNA binding"/>
    <property type="evidence" value="ECO:0000314"/>
    <property type="project" value="TAIR"/>
</dbReference>
<dbReference type="GO" id="GO:0003735">
    <property type="term" value="F:structural constituent of ribosome"/>
    <property type="evidence" value="ECO:0000314"/>
    <property type="project" value="CAFA"/>
</dbReference>
<dbReference type="GO" id="GO:0006412">
    <property type="term" value="P:translation"/>
    <property type="evidence" value="ECO:0007669"/>
    <property type="project" value="InterPro"/>
</dbReference>
<dbReference type="Gene3D" id="6.20.340.10">
    <property type="match status" value="1"/>
</dbReference>
<dbReference type="Gene3D" id="6.20.370.70">
    <property type="match status" value="1"/>
</dbReference>
<dbReference type="InterPro" id="IPR008195">
    <property type="entry name" value="Ribosomal_eL34"/>
</dbReference>
<dbReference type="InterPro" id="IPR038562">
    <property type="entry name" value="Ribosomal_eL34_C_sf"/>
</dbReference>
<dbReference type="InterPro" id="IPR018065">
    <property type="entry name" value="Ribosomal_eL34_CS"/>
</dbReference>
<dbReference type="PANTHER" id="PTHR10759">
    <property type="entry name" value="60S RIBOSOMAL PROTEIN L34"/>
    <property type="match status" value="1"/>
</dbReference>
<dbReference type="Pfam" id="PF01199">
    <property type="entry name" value="Ribosomal_L34e"/>
    <property type="match status" value="1"/>
</dbReference>
<dbReference type="PRINTS" id="PR01250">
    <property type="entry name" value="RIBOSOMALL34"/>
</dbReference>
<dbReference type="PROSITE" id="PS01145">
    <property type="entry name" value="RIBOSOMAL_L34E"/>
    <property type="match status" value="1"/>
</dbReference>
<sequence>MVQRLVYRSRHSYATKSNQHRIVKTPGGKLTYQTTNKRASGPKCPVTGKRIQGIPHLRPAEYKRSRLARNERTVNRAYGGVLSGVAVRERIVRAFLVEEQKIVKKVLKLQKAKEKTAPKS</sequence>
<gene>
    <name type="primary">RPL34C</name>
    <name type="ordered locus">At3g28900</name>
    <name type="ORF">MLD15.7</name>
</gene>
<evidence type="ECO:0000256" key="1">
    <source>
        <dbReference type="SAM" id="MobiDB-lite"/>
    </source>
</evidence>
<evidence type="ECO:0000303" key="2">
    <source>
    </source>
</evidence>
<evidence type="ECO:0000305" key="3"/>
<proteinExistence type="evidence at transcript level"/>
<accession>Q9LJW6</accession>
<comment type="similarity">
    <text evidence="3">Belongs to the eukaryotic ribosomal protein eL34 family.</text>
</comment>
<name>RL343_ARATH</name>
<organism>
    <name type="scientific">Arabidopsis thaliana</name>
    <name type="common">Mouse-ear cress</name>
    <dbReference type="NCBI Taxonomy" id="3702"/>
    <lineage>
        <taxon>Eukaryota</taxon>
        <taxon>Viridiplantae</taxon>
        <taxon>Streptophyta</taxon>
        <taxon>Embryophyta</taxon>
        <taxon>Tracheophyta</taxon>
        <taxon>Spermatophyta</taxon>
        <taxon>Magnoliopsida</taxon>
        <taxon>eudicotyledons</taxon>
        <taxon>Gunneridae</taxon>
        <taxon>Pentapetalae</taxon>
        <taxon>rosids</taxon>
        <taxon>malvids</taxon>
        <taxon>Brassicales</taxon>
        <taxon>Brassicaceae</taxon>
        <taxon>Camelineae</taxon>
        <taxon>Arabidopsis</taxon>
    </lineage>
</organism>
<reference key="1">
    <citation type="journal article" date="2000" name="DNA Res.">
        <title>Structural analysis of Arabidopsis thaliana chromosome 3. II. Sequence features of the 4,251,695 bp regions covered by 90 P1, TAC and BAC clones.</title>
        <authorList>
            <person name="Kaneko T."/>
            <person name="Katoh T."/>
            <person name="Sato S."/>
            <person name="Nakamura Y."/>
            <person name="Asamizu E."/>
            <person name="Tabata S."/>
        </authorList>
    </citation>
    <scope>NUCLEOTIDE SEQUENCE [LARGE SCALE GENOMIC DNA]</scope>
    <source>
        <strain>cv. Columbia</strain>
    </source>
</reference>
<reference key="2">
    <citation type="journal article" date="2017" name="Plant J.">
        <title>Araport11: a complete reannotation of the Arabidopsis thaliana reference genome.</title>
        <authorList>
            <person name="Cheng C.Y."/>
            <person name="Krishnakumar V."/>
            <person name="Chan A.P."/>
            <person name="Thibaud-Nissen F."/>
            <person name="Schobel S."/>
            <person name="Town C.D."/>
        </authorList>
    </citation>
    <scope>GENOME REANNOTATION</scope>
    <source>
        <strain>cv. Columbia</strain>
    </source>
</reference>
<reference key="3">
    <citation type="journal article" date="2003" name="Science">
        <title>Empirical analysis of transcriptional activity in the Arabidopsis genome.</title>
        <authorList>
            <person name="Yamada K."/>
            <person name="Lim J."/>
            <person name="Dale J.M."/>
            <person name="Chen H."/>
            <person name="Shinn P."/>
            <person name="Palm C.J."/>
            <person name="Southwick A.M."/>
            <person name="Wu H.C."/>
            <person name="Kim C.J."/>
            <person name="Nguyen M."/>
            <person name="Pham P.K."/>
            <person name="Cheuk R.F."/>
            <person name="Karlin-Newmann G."/>
            <person name="Liu S.X."/>
            <person name="Lam B."/>
            <person name="Sakano H."/>
            <person name="Wu T."/>
            <person name="Yu G."/>
            <person name="Miranda M."/>
            <person name="Quach H.L."/>
            <person name="Tripp M."/>
            <person name="Chang C.H."/>
            <person name="Lee J.M."/>
            <person name="Toriumi M.J."/>
            <person name="Chan M.M."/>
            <person name="Tang C.C."/>
            <person name="Onodera C.S."/>
            <person name="Deng J.M."/>
            <person name="Akiyama K."/>
            <person name="Ansari Y."/>
            <person name="Arakawa T."/>
            <person name="Banh J."/>
            <person name="Banno F."/>
            <person name="Bowser L."/>
            <person name="Brooks S.Y."/>
            <person name="Carninci P."/>
            <person name="Chao Q."/>
            <person name="Choy N."/>
            <person name="Enju A."/>
            <person name="Goldsmith A.D."/>
            <person name="Gurjal M."/>
            <person name="Hansen N.F."/>
            <person name="Hayashizaki Y."/>
            <person name="Johnson-Hopson C."/>
            <person name="Hsuan V.W."/>
            <person name="Iida K."/>
            <person name="Karnes M."/>
            <person name="Khan S."/>
            <person name="Koesema E."/>
            <person name="Ishida J."/>
            <person name="Jiang P.X."/>
            <person name="Jones T."/>
            <person name="Kawai J."/>
            <person name="Kamiya A."/>
            <person name="Meyers C."/>
            <person name="Nakajima M."/>
            <person name="Narusaka M."/>
            <person name="Seki M."/>
            <person name="Sakurai T."/>
            <person name="Satou M."/>
            <person name="Tamse R."/>
            <person name="Vaysberg M."/>
            <person name="Wallender E.K."/>
            <person name="Wong C."/>
            <person name="Yamamura Y."/>
            <person name="Yuan S."/>
            <person name="Shinozaki K."/>
            <person name="Davis R.W."/>
            <person name="Theologis A."/>
            <person name="Ecker J.R."/>
        </authorList>
    </citation>
    <scope>NUCLEOTIDE SEQUENCE [LARGE SCALE MRNA]</scope>
    <source>
        <strain>cv. Columbia</strain>
    </source>
</reference>
<reference key="4">
    <citation type="journal article" date="2001" name="Plant Physiol.">
        <title>The organization of cytoplasmic ribosomal protein genes in the Arabidopsis genome.</title>
        <authorList>
            <person name="Barakat A."/>
            <person name="Szick-Miranda K."/>
            <person name="Chang I.-F."/>
            <person name="Guyot R."/>
            <person name="Blanc G."/>
            <person name="Cooke R."/>
            <person name="Delseny M."/>
            <person name="Bailey-Serres J."/>
        </authorList>
    </citation>
    <scope>GENE FAMILY ORGANIZATION</scope>
    <scope>NOMENCLATURE</scope>
</reference>
<reference key="5">
    <citation type="journal article" date="2023" name="Plant Cell">
        <title>An updated nomenclature for plant ribosomal protein genes.</title>
        <authorList>
            <person name="Scarpin M.R."/>
            <person name="Busche M."/>
            <person name="Martinez R.E."/>
            <person name="Harper L.C."/>
            <person name="Reiser L."/>
            <person name="Szakonyi D."/>
            <person name="Merchante C."/>
            <person name="Lan T."/>
            <person name="Xiong W."/>
            <person name="Mo B."/>
            <person name="Tang G."/>
            <person name="Chen X."/>
            <person name="Bailey-Serres J."/>
            <person name="Browning K.S."/>
            <person name="Brunkard J.O."/>
        </authorList>
    </citation>
    <scope>NOMENCLATURE</scope>
</reference>
<protein>
    <recommendedName>
        <fullName evidence="2">Large ribosomal subunit protein eL34x</fullName>
    </recommendedName>
    <alternativeName>
        <fullName>60S ribosomal protein L34-3</fullName>
    </alternativeName>
</protein>
<feature type="chain" id="PRO_0000245461" description="Large ribosomal subunit protein eL34x">
    <location>
        <begin position="1"/>
        <end position="120"/>
    </location>
</feature>
<feature type="region of interest" description="Disordered" evidence="1">
    <location>
        <begin position="31"/>
        <end position="50"/>
    </location>
</feature>
<keyword id="KW-1185">Reference proteome</keyword>
<keyword id="KW-0687">Ribonucleoprotein</keyword>
<keyword id="KW-0689">Ribosomal protein</keyword>